<name>CYTR_ECOLI</name>
<comment type="function">
    <text>This protein negatively controls the transcription initiation of genes such as deoCABD, udp, and cdd encoding catabolizing enzymes and nupC, nupG, and tsx encoding transporting and pore-forming proteins. Binds cytidine and adenosine as effectors.</text>
</comment>
<comment type="interaction">
    <interactant intactId="EBI-1125696">
        <id>P0ACN7</id>
    </interactant>
    <interactant intactId="EBI-554089">
        <id>P69797</id>
        <label>manX</label>
    </interactant>
    <organismsDiffer>false</organismsDiffer>
    <experiments>2</experiments>
</comment>
<keyword id="KW-0002">3D-structure</keyword>
<keyword id="KW-0238">DNA-binding</keyword>
<keyword id="KW-1185">Reference proteome</keyword>
<keyword id="KW-0678">Repressor</keyword>
<keyword id="KW-0804">Transcription</keyword>
<keyword id="KW-0805">Transcription regulation</keyword>
<reference key="1">
    <citation type="journal article" date="1986" name="Nucleic Acids Res.">
        <title>Nucleotide sequence of the CytR regulatory gene of E. coli K-12.</title>
        <authorList>
            <person name="Valentin-Hansen P."/>
            <person name="Larsen J.E.L."/>
            <person name="Hoejrup P."/>
            <person name="Short S.A."/>
            <person name="Barbier C.S."/>
        </authorList>
    </citation>
    <scope>NUCLEOTIDE SEQUENCE [GENOMIC DNA]</scope>
    <source>
        <strain>K12</strain>
    </source>
</reference>
<reference key="2">
    <citation type="journal article" date="1993" name="Nucleic Acids Res.">
        <title>Analysis of the Escherichia coli genome. III. DNA sequence of the region from 87.2 to 89.2 minutes.</title>
        <authorList>
            <person name="Plunkett G. III"/>
            <person name="Burland V."/>
            <person name="Daniels D.L."/>
            <person name="Blattner F.R."/>
        </authorList>
    </citation>
    <scope>NUCLEOTIDE SEQUENCE [LARGE SCALE GENOMIC DNA]</scope>
    <source>
        <strain>K12 / MG1655 / ATCC 47076</strain>
    </source>
</reference>
<reference key="3">
    <citation type="journal article" date="1997" name="Science">
        <title>The complete genome sequence of Escherichia coli K-12.</title>
        <authorList>
            <person name="Blattner F.R."/>
            <person name="Plunkett G. III"/>
            <person name="Bloch C.A."/>
            <person name="Perna N.T."/>
            <person name="Burland V."/>
            <person name="Riley M."/>
            <person name="Collado-Vides J."/>
            <person name="Glasner J.D."/>
            <person name="Rode C.K."/>
            <person name="Mayhew G.F."/>
            <person name="Gregor J."/>
            <person name="Davis N.W."/>
            <person name="Kirkpatrick H.A."/>
            <person name="Goeden M.A."/>
            <person name="Rose D.J."/>
            <person name="Mau B."/>
            <person name="Shao Y."/>
        </authorList>
    </citation>
    <scope>NUCLEOTIDE SEQUENCE [LARGE SCALE GENOMIC DNA]</scope>
    <source>
        <strain>K12 / MG1655 / ATCC 47076</strain>
    </source>
</reference>
<reference key="4">
    <citation type="journal article" date="2006" name="Mol. Syst. Biol.">
        <title>Highly accurate genome sequences of Escherichia coli K-12 strains MG1655 and W3110.</title>
        <authorList>
            <person name="Hayashi K."/>
            <person name="Morooka N."/>
            <person name="Yamamoto Y."/>
            <person name="Fujita K."/>
            <person name="Isono K."/>
            <person name="Choi S."/>
            <person name="Ohtsubo E."/>
            <person name="Baba T."/>
            <person name="Wanner B.L."/>
            <person name="Mori H."/>
            <person name="Horiuchi T."/>
        </authorList>
    </citation>
    <scope>NUCLEOTIDE SEQUENCE [LARGE SCALE GENOMIC DNA]</scope>
    <source>
        <strain>K12 / W3110 / ATCC 27325 / DSM 5911</strain>
    </source>
</reference>
<reference key="5">
    <citation type="journal article" date="1990" name="Proc. Natl. Acad. Sci. U.S.A.">
        <title>The priA gene encoding the primosomal replicative n' protein of Escherichia coli.</title>
        <authorList>
            <person name="Lee E.H."/>
            <person name="Masai H."/>
            <person name="Allen G.C. Jr."/>
            <person name="Kornberg A."/>
        </authorList>
    </citation>
    <scope>NUCLEOTIDE SEQUENCE [GENOMIC DNA] OF 1-80</scope>
    <source>
        <strain>K12 / W3110 / ATCC 27325 / DSM 5911</strain>
    </source>
</reference>
<organism>
    <name type="scientific">Escherichia coli (strain K12)</name>
    <dbReference type="NCBI Taxonomy" id="83333"/>
    <lineage>
        <taxon>Bacteria</taxon>
        <taxon>Pseudomonadati</taxon>
        <taxon>Pseudomonadota</taxon>
        <taxon>Gammaproteobacteria</taxon>
        <taxon>Enterobacterales</taxon>
        <taxon>Enterobacteriaceae</taxon>
        <taxon>Escherichia</taxon>
    </lineage>
</organism>
<gene>
    <name type="primary">cytR</name>
    <name type="ordered locus">b3934</name>
    <name type="ordered locus">JW3905</name>
</gene>
<dbReference type="EMBL" id="X03683">
    <property type="protein sequence ID" value="CAA27318.1"/>
    <property type="molecule type" value="Genomic_DNA"/>
</dbReference>
<dbReference type="EMBL" id="L19201">
    <property type="protein sequence ID" value="AAB03066.1"/>
    <property type="molecule type" value="Genomic_DNA"/>
</dbReference>
<dbReference type="EMBL" id="U00096">
    <property type="protein sequence ID" value="AAC76916.1"/>
    <property type="molecule type" value="Genomic_DNA"/>
</dbReference>
<dbReference type="EMBL" id="AP009048">
    <property type="protein sequence ID" value="BAE77376.1"/>
    <property type="molecule type" value="Genomic_DNA"/>
</dbReference>
<dbReference type="EMBL" id="M33293">
    <property type="protein sequence ID" value="AAA24417.1"/>
    <property type="molecule type" value="Genomic_DNA"/>
</dbReference>
<dbReference type="PIR" id="A24963">
    <property type="entry name" value="RPECCT"/>
</dbReference>
<dbReference type="RefSeq" id="NP_418369.1">
    <property type="nucleotide sequence ID" value="NC_000913.3"/>
</dbReference>
<dbReference type="RefSeq" id="WP_000644904.1">
    <property type="nucleotide sequence ID" value="NZ_STEB01000017.1"/>
</dbReference>
<dbReference type="PDB" id="2LCV">
    <property type="method" value="NMR"/>
    <property type="chains" value="A=1-67"/>
</dbReference>
<dbReference type="PDBsum" id="2LCV"/>
<dbReference type="BMRB" id="P0ACN7"/>
<dbReference type="SMR" id="P0ACN7"/>
<dbReference type="BioGRID" id="4262650">
    <property type="interactions" value="88"/>
</dbReference>
<dbReference type="BioGRID" id="852724">
    <property type="interactions" value="5"/>
</dbReference>
<dbReference type="DIP" id="DIP-9390N"/>
<dbReference type="FunCoup" id="P0ACN7">
    <property type="interactions" value="269"/>
</dbReference>
<dbReference type="IntAct" id="P0ACN7">
    <property type="interactions" value="6"/>
</dbReference>
<dbReference type="STRING" id="511145.b3934"/>
<dbReference type="jPOST" id="P0ACN7"/>
<dbReference type="PaxDb" id="511145-b3934"/>
<dbReference type="EnsemblBacteria" id="AAC76916">
    <property type="protein sequence ID" value="AAC76916"/>
    <property type="gene ID" value="b3934"/>
</dbReference>
<dbReference type="GeneID" id="93777964"/>
<dbReference type="GeneID" id="948427"/>
<dbReference type="KEGG" id="ecj:JW3905"/>
<dbReference type="KEGG" id="eco:b3934"/>
<dbReference type="PATRIC" id="fig|1411691.4.peg.2771"/>
<dbReference type="EchoBASE" id="EB0196"/>
<dbReference type="eggNOG" id="COG1609">
    <property type="taxonomic scope" value="Bacteria"/>
</dbReference>
<dbReference type="HOGENOM" id="CLU_037628_6_0_6"/>
<dbReference type="InParanoid" id="P0ACN7"/>
<dbReference type="OMA" id="MVFVDRW"/>
<dbReference type="OrthoDB" id="9798934at2"/>
<dbReference type="PhylomeDB" id="P0ACN7"/>
<dbReference type="BioCyc" id="EcoCyc:PD04028"/>
<dbReference type="EvolutionaryTrace" id="P0ACN7"/>
<dbReference type="PRO" id="PR:P0ACN7"/>
<dbReference type="Proteomes" id="UP000000625">
    <property type="component" value="Chromosome"/>
</dbReference>
<dbReference type="GO" id="GO:0005829">
    <property type="term" value="C:cytosol"/>
    <property type="evidence" value="ECO:0000314"/>
    <property type="project" value="EcoCyc"/>
</dbReference>
<dbReference type="GO" id="GO:0003677">
    <property type="term" value="F:DNA binding"/>
    <property type="evidence" value="ECO:0000269"/>
    <property type="project" value="DisProt"/>
</dbReference>
<dbReference type="GO" id="GO:0003700">
    <property type="term" value="F:DNA-binding transcription factor activity"/>
    <property type="evidence" value="ECO:0000318"/>
    <property type="project" value="GO_Central"/>
</dbReference>
<dbReference type="GO" id="GO:0000976">
    <property type="term" value="F:transcription cis-regulatory region binding"/>
    <property type="evidence" value="ECO:0000314"/>
    <property type="project" value="EcoCyc"/>
</dbReference>
<dbReference type="GO" id="GO:0045892">
    <property type="term" value="P:negative regulation of DNA-templated transcription"/>
    <property type="evidence" value="ECO:0000315"/>
    <property type="project" value="EcoCyc"/>
</dbReference>
<dbReference type="GO" id="GO:0006355">
    <property type="term" value="P:regulation of DNA-templated transcription"/>
    <property type="evidence" value="ECO:0000318"/>
    <property type="project" value="GO_Central"/>
</dbReference>
<dbReference type="CDD" id="cd01392">
    <property type="entry name" value="HTH_LacI"/>
    <property type="match status" value="1"/>
</dbReference>
<dbReference type="CDD" id="cd06284">
    <property type="entry name" value="PBP1_LacI-like"/>
    <property type="match status" value="1"/>
</dbReference>
<dbReference type="DisProt" id="DP02541"/>
<dbReference type="FunFam" id="1.10.260.40:FF:000012">
    <property type="entry name" value="HTH-type transcriptional regulator GntR"/>
    <property type="match status" value="1"/>
</dbReference>
<dbReference type="FunFam" id="3.40.50.2300:FF:000116">
    <property type="entry name" value="HTH-type transcriptional repressor CytR"/>
    <property type="match status" value="1"/>
</dbReference>
<dbReference type="Gene3D" id="3.40.50.2300">
    <property type="match status" value="2"/>
</dbReference>
<dbReference type="Gene3D" id="1.10.260.40">
    <property type="entry name" value="lambda repressor-like DNA-binding domains"/>
    <property type="match status" value="1"/>
</dbReference>
<dbReference type="InterPro" id="IPR000843">
    <property type="entry name" value="HTH_LacI"/>
</dbReference>
<dbReference type="InterPro" id="IPR046335">
    <property type="entry name" value="LacI/GalR-like_sensor"/>
</dbReference>
<dbReference type="InterPro" id="IPR010982">
    <property type="entry name" value="Lambda_DNA-bd_dom_sf"/>
</dbReference>
<dbReference type="InterPro" id="IPR028082">
    <property type="entry name" value="Peripla_BP_I"/>
</dbReference>
<dbReference type="NCBIfam" id="NF008269">
    <property type="entry name" value="PRK11041.1"/>
    <property type="match status" value="1"/>
</dbReference>
<dbReference type="PANTHER" id="PTHR30146:SF151">
    <property type="entry name" value="HTH-TYPE TRANSCRIPTIONAL REPRESSOR CYTR"/>
    <property type="match status" value="1"/>
</dbReference>
<dbReference type="PANTHER" id="PTHR30146">
    <property type="entry name" value="LACI-RELATED TRANSCRIPTIONAL REPRESSOR"/>
    <property type="match status" value="1"/>
</dbReference>
<dbReference type="Pfam" id="PF00356">
    <property type="entry name" value="LacI"/>
    <property type="match status" value="1"/>
</dbReference>
<dbReference type="Pfam" id="PF13377">
    <property type="entry name" value="Peripla_BP_3"/>
    <property type="match status" value="1"/>
</dbReference>
<dbReference type="SMART" id="SM00354">
    <property type="entry name" value="HTH_LACI"/>
    <property type="match status" value="1"/>
</dbReference>
<dbReference type="SUPFAM" id="SSF47413">
    <property type="entry name" value="lambda repressor-like DNA-binding domains"/>
    <property type="match status" value="1"/>
</dbReference>
<dbReference type="SUPFAM" id="SSF53822">
    <property type="entry name" value="Periplasmic binding protein-like I"/>
    <property type="match status" value="1"/>
</dbReference>
<dbReference type="PROSITE" id="PS00356">
    <property type="entry name" value="HTH_LACI_1"/>
    <property type="match status" value="1"/>
</dbReference>
<dbReference type="PROSITE" id="PS50932">
    <property type="entry name" value="HTH_LACI_2"/>
    <property type="match status" value="1"/>
</dbReference>
<feature type="chain" id="PRO_0000107938" description="HTH-type transcriptional repressor CytR">
    <location>
        <begin position="1"/>
        <end position="341"/>
    </location>
</feature>
<feature type="domain" description="HTH lacI-type" evidence="1">
    <location>
        <begin position="10"/>
        <end position="64"/>
    </location>
</feature>
<feature type="DNA-binding region" description="H-T-H motif" evidence="1">
    <location>
        <begin position="12"/>
        <end position="31"/>
    </location>
</feature>
<feature type="helix" evidence="2">
    <location>
        <begin position="12"/>
        <end position="18"/>
    </location>
</feature>
<feature type="helix" evidence="2">
    <location>
        <begin position="23"/>
        <end position="29"/>
    </location>
</feature>
<feature type="helix" evidence="2">
    <location>
        <begin position="38"/>
        <end position="50"/>
    </location>
</feature>
<proteinExistence type="evidence at protein level"/>
<evidence type="ECO:0000255" key="1">
    <source>
        <dbReference type="PROSITE-ProRule" id="PRU00111"/>
    </source>
</evidence>
<evidence type="ECO:0007829" key="2">
    <source>
        <dbReference type="PDB" id="2LCV"/>
    </source>
</evidence>
<sequence length="341" mass="37820">MKAKKQETAATMKDVALKAKVSTATVSRALMNPDKVSQATRNRVEKAAREVGYLPQPMGRNVKRNESRTILVIVPDICDPFFSEIIRGIEVTAANHGYLVLIGDCAHQNQQEKTFIDLIITKQIDGMLLLGSRLPFDASIEEQRNLPPMVMANEFAPELELPTVHIDNLTAAFDAVNYLYEQGHKRIGCIAGPEEMPLCHYRLQGYVQALRRCGIMVDPQYIARGDFTFEAGSKAMQQLLDLPQPPTAVFCHSDVMALGALSQAKRQGLKVPEDLSIIGFDNIDLTQFCDPPLTTIAQPRYEIGREAMLLLLDQMQGQHVGSGSRLMDCELIIRGSTRALP</sequence>
<protein>
    <recommendedName>
        <fullName>HTH-type transcriptional repressor CytR</fullName>
    </recommendedName>
</protein>
<accession>P0ACN7</accession>
<accession>P06964</accession>
<accession>Q2M8N0</accession>